<reference key="1">
    <citation type="journal article" date="2003" name="Proc. Natl. Acad. Sci. U.S.A.">
        <title>The complete genome sequence of Mycobacterium bovis.</title>
        <authorList>
            <person name="Garnier T."/>
            <person name="Eiglmeier K."/>
            <person name="Camus J.-C."/>
            <person name="Medina N."/>
            <person name="Mansoor H."/>
            <person name="Pryor M."/>
            <person name="Duthoy S."/>
            <person name="Grondin S."/>
            <person name="Lacroix C."/>
            <person name="Monsempe C."/>
            <person name="Simon S."/>
            <person name="Harris B."/>
            <person name="Atkin R."/>
            <person name="Doggett J."/>
            <person name="Mayes R."/>
            <person name="Keating L."/>
            <person name="Wheeler P.R."/>
            <person name="Parkhill J."/>
            <person name="Barrell B.G."/>
            <person name="Cole S.T."/>
            <person name="Gordon S.V."/>
            <person name="Hewinson R.G."/>
        </authorList>
    </citation>
    <scope>NUCLEOTIDE SEQUENCE [LARGE SCALE GENOMIC DNA]</scope>
    <source>
        <strain>ATCC BAA-935 / AF2122/97</strain>
    </source>
</reference>
<reference key="2">
    <citation type="journal article" date="2017" name="Genome Announc.">
        <title>Updated reference genome sequence and annotation of Mycobacterium bovis AF2122/97.</title>
        <authorList>
            <person name="Malone K.M."/>
            <person name="Farrell D."/>
            <person name="Stuber T.P."/>
            <person name="Schubert O.T."/>
            <person name="Aebersold R."/>
            <person name="Robbe-Austerman S."/>
            <person name="Gordon S.V."/>
        </authorList>
    </citation>
    <scope>NUCLEOTIDE SEQUENCE [LARGE SCALE GENOMIC DNA]</scope>
    <scope>GENOME REANNOTATION</scope>
    <source>
        <strain>ATCC BAA-935 / AF2122/97</strain>
    </source>
</reference>
<evidence type="ECO:0000250" key="1"/>
<evidence type="ECO:0000255" key="2"/>
<evidence type="ECO:0000305" key="3"/>
<keyword id="KW-0067">ATP-binding</keyword>
<keyword id="KW-1003">Cell membrane</keyword>
<keyword id="KW-0170">Cobalt</keyword>
<keyword id="KW-0460">Magnesium</keyword>
<keyword id="KW-0472">Membrane</keyword>
<keyword id="KW-0479">Metal-binding</keyword>
<keyword id="KW-0533">Nickel</keyword>
<keyword id="KW-0547">Nucleotide-binding</keyword>
<keyword id="KW-0597">Phosphoprotein</keyword>
<keyword id="KW-1185">Reference proteome</keyword>
<keyword id="KW-1278">Translocase</keyword>
<keyword id="KW-0812">Transmembrane</keyword>
<keyword id="KW-1133">Transmembrane helix</keyword>
<feature type="chain" id="PRO_0000046338" description="Probable cobalt/nickel-exporting P-type ATPase">
    <location>
        <begin position="1"/>
        <end position="657"/>
    </location>
</feature>
<feature type="transmembrane region" description="Helical" evidence="2">
    <location>
        <begin position="40"/>
        <end position="60"/>
    </location>
</feature>
<feature type="transmembrane region" description="Helical" evidence="2">
    <location>
        <begin position="62"/>
        <end position="82"/>
    </location>
</feature>
<feature type="transmembrane region" description="Helical" evidence="2">
    <location>
        <begin position="101"/>
        <end position="121"/>
    </location>
</feature>
<feature type="transmembrane region" description="Helical" evidence="2">
    <location>
        <begin position="268"/>
        <end position="288"/>
    </location>
</feature>
<feature type="transmembrane region" description="Helical" evidence="2">
    <location>
        <begin position="299"/>
        <end position="319"/>
    </location>
</feature>
<feature type="transmembrane region" description="Helical" evidence="2">
    <location>
        <begin position="596"/>
        <end position="618"/>
    </location>
</feature>
<feature type="active site" description="4-aspartylphosphate intermediate" evidence="1">
    <location>
        <position position="347"/>
    </location>
</feature>
<feature type="binding site" evidence="1">
    <location>
        <position position="543"/>
    </location>
    <ligand>
        <name>Mg(2+)</name>
        <dbReference type="ChEBI" id="CHEBI:18420"/>
    </ligand>
</feature>
<feature type="binding site" evidence="1">
    <location>
        <position position="547"/>
    </location>
    <ligand>
        <name>Mg(2+)</name>
        <dbReference type="ChEBI" id="CHEBI:18420"/>
    </ligand>
</feature>
<gene>
    <name type="primary">ctpD</name>
    <name type="ordered locus">BQ2027_MB1504</name>
</gene>
<dbReference type="EC" id="7.2.2.-"/>
<dbReference type="EMBL" id="LT708304">
    <property type="protein sequence ID" value="SIU00107.1"/>
    <property type="molecule type" value="Genomic_DNA"/>
</dbReference>
<dbReference type="RefSeq" id="NP_855156.1">
    <property type="nucleotide sequence ID" value="NC_002945.3"/>
</dbReference>
<dbReference type="RefSeq" id="WP_003900344.1">
    <property type="nucleotide sequence ID" value="NC_002945.4"/>
</dbReference>
<dbReference type="SMR" id="P63686"/>
<dbReference type="KEGG" id="mbo:BQ2027_MB1504"/>
<dbReference type="PATRIC" id="fig|233413.5.peg.1645"/>
<dbReference type="Proteomes" id="UP000001419">
    <property type="component" value="Chromosome"/>
</dbReference>
<dbReference type="GO" id="GO:0005886">
    <property type="term" value="C:plasma membrane"/>
    <property type="evidence" value="ECO:0007669"/>
    <property type="project" value="UniProtKB-SubCell"/>
</dbReference>
<dbReference type="GO" id="GO:0005524">
    <property type="term" value="F:ATP binding"/>
    <property type="evidence" value="ECO:0007669"/>
    <property type="project" value="UniProtKB-KW"/>
</dbReference>
<dbReference type="GO" id="GO:0016887">
    <property type="term" value="F:ATP hydrolysis activity"/>
    <property type="evidence" value="ECO:0007669"/>
    <property type="project" value="InterPro"/>
</dbReference>
<dbReference type="GO" id="GO:0019829">
    <property type="term" value="F:ATPase-coupled monoatomic cation transmembrane transporter activity"/>
    <property type="evidence" value="ECO:0007669"/>
    <property type="project" value="InterPro"/>
</dbReference>
<dbReference type="GO" id="GO:0046872">
    <property type="term" value="F:metal ion binding"/>
    <property type="evidence" value="ECO:0007669"/>
    <property type="project" value="UniProtKB-KW"/>
</dbReference>
<dbReference type="CDD" id="cd07551">
    <property type="entry name" value="P-type_ATPase_HM_ZosA_PfeT-like"/>
    <property type="match status" value="1"/>
</dbReference>
<dbReference type="FunFam" id="2.70.150.10:FF:000002">
    <property type="entry name" value="Copper-transporting ATPase 1, putative"/>
    <property type="match status" value="1"/>
</dbReference>
<dbReference type="Gene3D" id="3.40.1110.10">
    <property type="entry name" value="Calcium-transporting ATPase, cytoplasmic domain N"/>
    <property type="match status" value="1"/>
</dbReference>
<dbReference type="Gene3D" id="2.70.150.10">
    <property type="entry name" value="Calcium-transporting ATPase, cytoplasmic transduction domain A"/>
    <property type="match status" value="1"/>
</dbReference>
<dbReference type="Gene3D" id="3.40.50.1000">
    <property type="entry name" value="HAD superfamily/HAD-like"/>
    <property type="match status" value="1"/>
</dbReference>
<dbReference type="InterPro" id="IPR023299">
    <property type="entry name" value="ATPase_P-typ_cyto_dom_N"/>
</dbReference>
<dbReference type="InterPro" id="IPR018303">
    <property type="entry name" value="ATPase_P-typ_P_site"/>
</dbReference>
<dbReference type="InterPro" id="IPR023298">
    <property type="entry name" value="ATPase_P-typ_TM_dom_sf"/>
</dbReference>
<dbReference type="InterPro" id="IPR008250">
    <property type="entry name" value="ATPase_P-typ_transduc_dom_A_sf"/>
</dbReference>
<dbReference type="InterPro" id="IPR051949">
    <property type="entry name" value="Cation_Transport_ATPase"/>
</dbReference>
<dbReference type="InterPro" id="IPR036412">
    <property type="entry name" value="HAD-like_sf"/>
</dbReference>
<dbReference type="InterPro" id="IPR023214">
    <property type="entry name" value="HAD_sf"/>
</dbReference>
<dbReference type="InterPro" id="IPR027256">
    <property type="entry name" value="P-typ_ATPase_IB"/>
</dbReference>
<dbReference type="InterPro" id="IPR001757">
    <property type="entry name" value="P_typ_ATPase"/>
</dbReference>
<dbReference type="NCBIfam" id="TIGR01512">
    <property type="entry name" value="ATPase-IB2_Cd"/>
    <property type="match status" value="1"/>
</dbReference>
<dbReference type="NCBIfam" id="TIGR01525">
    <property type="entry name" value="ATPase-IB_hvy"/>
    <property type="match status" value="1"/>
</dbReference>
<dbReference type="NCBIfam" id="TIGR01494">
    <property type="entry name" value="ATPase_P-type"/>
    <property type="match status" value="1"/>
</dbReference>
<dbReference type="PANTHER" id="PTHR43079:SF1">
    <property type="entry name" value="CADMIUM_ZINC-TRANSPORTING ATPASE HMA1, CHLOROPLASTIC-RELATED"/>
    <property type="match status" value="1"/>
</dbReference>
<dbReference type="PANTHER" id="PTHR43079">
    <property type="entry name" value="PROBABLE CADMIUM/ZINC-TRANSPORTING ATPASE HMA1"/>
    <property type="match status" value="1"/>
</dbReference>
<dbReference type="Pfam" id="PF00122">
    <property type="entry name" value="E1-E2_ATPase"/>
    <property type="match status" value="1"/>
</dbReference>
<dbReference type="Pfam" id="PF00702">
    <property type="entry name" value="Hydrolase"/>
    <property type="match status" value="1"/>
</dbReference>
<dbReference type="PRINTS" id="PR00119">
    <property type="entry name" value="CATATPASE"/>
</dbReference>
<dbReference type="PRINTS" id="PR00941">
    <property type="entry name" value="CDATPASE"/>
</dbReference>
<dbReference type="SUPFAM" id="SSF81653">
    <property type="entry name" value="Calcium ATPase, transduction domain A"/>
    <property type="match status" value="1"/>
</dbReference>
<dbReference type="SUPFAM" id="SSF81665">
    <property type="entry name" value="Calcium ATPase, transmembrane domain M"/>
    <property type="match status" value="1"/>
</dbReference>
<dbReference type="SUPFAM" id="SSF56784">
    <property type="entry name" value="HAD-like"/>
    <property type="match status" value="1"/>
</dbReference>
<dbReference type="PROSITE" id="PS00154">
    <property type="entry name" value="ATPASE_E1_E2"/>
    <property type="match status" value="1"/>
</dbReference>
<sequence length="657" mass="67885">MTLTACEVTAAEAPFDRVSKTIPHPLSWGAALWSVVSVRWATVALLLFLAGLVAQLNGAPEAMWWTLYLACYLAGGWGSAWAGAQALRNKALDVDLLMIAAAVGAVAIGQIFDGALLIVIFATSGALDDIATRHTAESVKGLLDLAPDQAVVVQGDGSERVVAASELVVGDRVVVRPGDRIPADGAVLSGASDVDQRSITGESMPVAKARGDEVFAGTVNGSGVLHLVVTRDPSQTVVARIVELVADASATKAKTQLFIEKIEQRYSLGMVAATLALIVIPLMFGADLRPVLLRAMTFMIVASPCAVVLATMPPLLSAIANAGRHGVLVKSAVVVERLADTSIVALDKTGTLTRGIPRLASVAPLDPNVVDARRLLQLAAAAEQSSEHPLGRAIVAEARRRGIAIPPAKDFRAVPGCGVHALVGNDFVEIASPQSYRGAPLAELAPLLSAGATAAIVLLDGVAIGVLGLTDQLRPDAVESVAAMAALTAAPPVLLTGDNGRAAWRVARNAGITDVRAALLPEQKVEVVRNLQAGGHQVLLVGDGVNDAPAMAAARAAVAMGAGADLTLQTADGVTIRDELHTIPTIIGLARQARRVVTVNLAIAATFIAVLVLWDLFGQLPLPLGVVGHEGSTVLVALNGMRLLTNRSWRAAASAAR</sequence>
<proteinExistence type="inferred from homology"/>
<comment type="function">
    <text evidence="1">Involved in heavy metal homeostasis. Probably exports nickel and cobalt ions out of the cell (By similarity).</text>
</comment>
<comment type="subcellular location">
    <subcellularLocation>
        <location>Cell membrane</location>
        <topology>Multi-pass membrane protein</topology>
    </subcellularLocation>
</comment>
<comment type="similarity">
    <text evidence="3">Belongs to the cation transport ATPase (P-type) (TC 3.A.3) family. Type IB subfamily.</text>
</comment>
<accession>P63686</accession>
<accession>A0A1R3XYG8</accession>
<accession>O53160</accession>
<accession>X2BHR4</accession>
<organism>
    <name type="scientific">Mycobacterium bovis (strain ATCC BAA-935 / AF2122/97)</name>
    <dbReference type="NCBI Taxonomy" id="233413"/>
    <lineage>
        <taxon>Bacteria</taxon>
        <taxon>Bacillati</taxon>
        <taxon>Actinomycetota</taxon>
        <taxon>Actinomycetes</taxon>
        <taxon>Mycobacteriales</taxon>
        <taxon>Mycobacteriaceae</taxon>
        <taxon>Mycobacterium</taxon>
        <taxon>Mycobacterium tuberculosis complex</taxon>
    </lineage>
</organism>
<name>CTPD_MYCBO</name>
<protein>
    <recommendedName>
        <fullName>Probable cobalt/nickel-exporting P-type ATPase</fullName>
        <ecNumber>7.2.2.-</ecNumber>
    </recommendedName>
    <alternativeName>
        <fullName>Cation-transporting P-type ATPase CtpD</fullName>
    </alternativeName>
</protein>